<gene>
    <name evidence="1" type="primary">rsmH2</name>
    <name type="synonym">mraW2</name>
    <name type="ordered locus">EUBREC_2254</name>
</gene>
<evidence type="ECO:0000255" key="1">
    <source>
        <dbReference type="HAMAP-Rule" id="MF_01007"/>
    </source>
</evidence>
<evidence type="ECO:0000256" key="2">
    <source>
        <dbReference type="SAM" id="MobiDB-lite"/>
    </source>
</evidence>
<accession>C4ZD30</accession>
<organism>
    <name type="scientific">Agathobacter rectalis (strain ATCC 33656 / DSM 3377 / JCM 17463 / KCTC 5835 / VPI 0990)</name>
    <name type="common">Eubacterium rectale</name>
    <dbReference type="NCBI Taxonomy" id="515619"/>
    <lineage>
        <taxon>Bacteria</taxon>
        <taxon>Bacillati</taxon>
        <taxon>Bacillota</taxon>
        <taxon>Clostridia</taxon>
        <taxon>Lachnospirales</taxon>
        <taxon>Lachnospiraceae</taxon>
        <taxon>Agathobacter</taxon>
    </lineage>
</organism>
<feature type="chain" id="PRO_0000386890" description="Ribosomal RNA small subunit methyltransferase H 2">
    <location>
        <begin position="1"/>
        <end position="314"/>
    </location>
</feature>
<feature type="region of interest" description="Disordered" evidence="2">
    <location>
        <begin position="293"/>
        <end position="314"/>
    </location>
</feature>
<feature type="binding site" evidence="1">
    <location>
        <begin position="33"/>
        <end position="35"/>
    </location>
    <ligand>
        <name>S-adenosyl-L-methionine</name>
        <dbReference type="ChEBI" id="CHEBI:59789"/>
    </ligand>
</feature>
<feature type="binding site" evidence="1">
    <location>
        <position position="53"/>
    </location>
    <ligand>
        <name>S-adenosyl-L-methionine</name>
        <dbReference type="ChEBI" id="CHEBI:59789"/>
    </ligand>
</feature>
<feature type="binding site" evidence="1">
    <location>
        <position position="80"/>
    </location>
    <ligand>
        <name>S-adenosyl-L-methionine</name>
        <dbReference type="ChEBI" id="CHEBI:59789"/>
    </ligand>
</feature>
<feature type="binding site" evidence="1">
    <location>
        <position position="101"/>
    </location>
    <ligand>
        <name>S-adenosyl-L-methionine</name>
        <dbReference type="ChEBI" id="CHEBI:59789"/>
    </ligand>
</feature>
<feature type="binding site" evidence="1">
    <location>
        <position position="108"/>
    </location>
    <ligand>
        <name>S-adenosyl-L-methionine</name>
        <dbReference type="ChEBI" id="CHEBI:59789"/>
    </ligand>
</feature>
<sequence length="314" mass="35352">MEFKHYSVLRDETIENLNIRPDGIYVDGTLGGAGHSYEIAKRLSDKGRLIGIDQDADAIKAAGERLAEFGDRVTIVRSNYSDMKNVLHSLGIEKVDGIMLDLGVSSFQLDTPKRGFTYRSEDAPLDMRMDDRNALTARDIVNTYSENDLYRIIRDYGEDKFAKNIAKHIVAARQKQEITTTGELNEIIKAAIPQKVRATGGHPSKRTYQAIRIELNHELDVLRDNLDDMIDLLNPGGRICIITFHSLEDRIVKSNFKKNENPCTCPPSFPVCVCGNKSKGTVITRKPILPSEKELEENSRSKSAKLRVFEKNDL</sequence>
<protein>
    <recommendedName>
        <fullName evidence="1">Ribosomal RNA small subunit methyltransferase H 2</fullName>
        <ecNumber evidence="1">2.1.1.199</ecNumber>
    </recommendedName>
    <alternativeName>
        <fullName evidence="1">16S rRNA m(4)C1402 methyltransferase 2</fullName>
    </alternativeName>
    <alternativeName>
        <fullName evidence="1">rRNA (cytosine-N(4)-)-methyltransferase RsmH 2</fullName>
    </alternativeName>
</protein>
<name>RSMH2_AGARV</name>
<proteinExistence type="inferred from homology"/>
<reference key="1">
    <citation type="journal article" date="2009" name="Proc. Natl. Acad. Sci. U.S.A.">
        <title>Characterizing a model human gut microbiota composed of members of its two dominant bacterial phyla.</title>
        <authorList>
            <person name="Mahowald M.A."/>
            <person name="Rey F.E."/>
            <person name="Seedorf H."/>
            <person name="Turnbaugh P.J."/>
            <person name="Fulton R.S."/>
            <person name="Wollam A."/>
            <person name="Shah N."/>
            <person name="Wang C."/>
            <person name="Magrini V."/>
            <person name="Wilson R.K."/>
            <person name="Cantarel B.L."/>
            <person name="Coutinho P.M."/>
            <person name="Henrissat B."/>
            <person name="Crock L.W."/>
            <person name="Russell A."/>
            <person name="Verberkmoes N.C."/>
            <person name="Hettich R.L."/>
            <person name="Gordon J.I."/>
        </authorList>
    </citation>
    <scope>NUCLEOTIDE SEQUENCE [LARGE SCALE GENOMIC DNA]</scope>
    <source>
        <strain>ATCC 33656 / DSM 3377 / JCM 17463 / KCTC 5835 / LMG 30912 / VPI 0990</strain>
    </source>
</reference>
<keyword id="KW-0963">Cytoplasm</keyword>
<keyword id="KW-0489">Methyltransferase</keyword>
<keyword id="KW-0698">rRNA processing</keyword>
<keyword id="KW-0949">S-adenosyl-L-methionine</keyword>
<keyword id="KW-0808">Transferase</keyword>
<comment type="function">
    <text evidence="1">Specifically methylates the N4 position of cytidine in position 1402 (C1402) of 16S rRNA.</text>
</comment>
<comment type="catalytic activity">
    <reaction evidence="1">
        <text>cytidine(1402) in 16S rRNA + S-adenosyl-L-methionine = N(4)-methylcytidine(1402) in 16S rRNA + S-adenosyl-L-homocysteine + H(+)</text>
        <dbReference type="Rhea" id="RHEA:42928"/>
        <dbReference type="Rhea" id="RHEA-COMP:10286"/>
        <dbReference type="Rhea" id="RHEA-COMP:10287"/>
        <dbReference type="ChEBI" id="CHEBI:15378"/>
        <dbReference type="ChEBI" id="CHEBI:57856"/>
        <dbReference type="ChEBI" id="CHEBI:59789"/>
        <dbReference type="ChEBI" id="CHEBI:74506"/>
        <dbReference type="ChEBI" id="CHEBI:82748"/>
        <dbReference type="EC" id="2.1.1.199"/>
    </reaction>
</comment>
<comment type="subcellular location">
    <subcellularLocation>
        <location evidence="1">Cytoplasm</location>
    </subcellularLocation>
</comment>
<comment type="similarity">
    <text evidence="1">Belongs to the methyltransferase superfamily. RsmH family.</text>
</comment>
<dbReference type="EC" id="2.1.1.199" evidence="1"/>
<dbReference type="EMBL" id="CP001107">
    <property type="protein sequence ID" value="ACR75993.1"/>
    <property type="molecule type" value="Genomic_DNA"/>
</dbReference>
<dbReference type="SMR" id="C4ZD30"/>
<dbReference type="STRING" id="515619.EUBREC_2254"/>
<dbReference type="PaxDb" id="515619-EUBREC_2254"/>
<dbReference type="KEGG" id="ere:EUBREC_2254"/>
<dbReference type="HOGENOM" id="CLU_038422_2_0_9"/>
<dbReference type="Proteomes" id="UP000001477">
    <property type="component" value="Chromosome"/>
</dbReference>
<dbReference type="GO" id="GO:0005737">
    <property type="term" value="C:cytoplasm"/>
    <property type="evidence" value="ECO:0007669"/>
    <property type="project" value="UniProtKB-SubCell"/>
</dbReference>
<dbReference type="GO" id="GO:0071424">
    <property type="term" value="F:rRNA (cytosine-N4-)-methyltransferase activity"/>
    <property type="evidence" value="ECO:0007669"/>
    <property type="project" value="UniProtKB-UniRule"/>
</dbReference>
<dbReference type="GO" id="GO:0070475">
    <property type="term" value="P:rRNA base methylation"/>
    <property type="evidence" value="ECO:0007669"/>
    <property type="project" value="UniProtKB-UniRule"/>
</dbReference>
<dbReference type="Gene3D" id="1.10.150.170">
    <property type="entry name" value="Putative methyltransferase TM0872, insert domain"/>
    <property type="match status" value="1"/>
</dbReference>
<dbReference type="Gene3D" id="3.40.50.150">
    <property type="entry name" value="Vaccinia Virus protein VP39"/>
    <property type="match status" value="1"/>
</dbReference>
<dbReference type="HAMAP" id="MF_01007">
    <property type="entry name" value="16SrRNA_methyltr_H"/>
    <property type="match status" value="1"/>
</dbReference>
<dbReference type="InterPro" id="IPR002903">
    <property type="entry name" value="RsmH"/>
</dbReference>
<dbReference type="InterPro" id="IPR023397">
    <property type="entry name" value="SAM-dep_MeTrfase_MraW_recog"/>
</dbReference>
<dbReference type="InterPro" id="IPR029063">
    <property type="entry name" value="SAM-dependent_MTases_sf"/>
</dbReference>
<dbReference type="NCBIfam" id="TIGR00006">
    <property type="entry name" value="16S rRNA (cytosine(1402)-N(4))-methyltransferase RsmH"/>
    <property type="match status" value="1"/>
</dbReference>
<dbReference type="PANTHER" id="PTHR11265:SF0">
    <property type="entry name" value="12S RRNA N4-METHYLCYTIDINE METHYLTRANSFERASE"/>
    <property type="match status" value="1"/>
</dbReference>
<dbReference type="PANTHER" id="PTHR11265">
    <property type="entry name" value="S-ADENOSYL-METHYLTRANSFERASE MRAW"/>
    <property type="match status" value="1"/>
</dbReference>
<dbReference type="Pfam" id="PF01795">
    <property type="entry name" value="Methyltransf_5"/>
    <property type="match status" value="1"/>
</dbReference>
<dbReference type="PIRSF" id="PIRSF004486">
    <property type="entry name" value="MraW"/>
    <property type="match status" value="1"/>
</dbReference>
<dbReference type="SUPFAM" id="SSF81799">
    <property type="entry name" value="Putative methyltransferase TM0872, insert domain"/>
    <property type="match status" value="1"/>
</dbReference>
<dbReference type="SUPFAM" id="SSF53335">
    <property type="entry name" value="S-adenosyl-L-methionine-dependent methyltransferases"/>
    <property type="match status" value="1"/>
</dbReference>